<accession>Q7N6I5</accession>
<evidence type="ECO:0000255" key="1">
    <source>
        <dbReference type="HAMAP-Rule" id="MF_01013"/>
    </source>
</evidence>
<reference key="1">
    <citation type="journal article" date="2003" name="Nat. Biotechnol.">
        <title>The genome sequence of the entomopathogenic bacterium Photorhabdus luminescens.</title>
        <authorList>
            <person name="Duchaud E."/>
            <person name="Rusniok C."/>
            <person name="Frangeul L."/>
            <person name="Buchrieser C."/>
            <person name="Givaudan A."/>
            <person name="Taourit S."/>
            <person name="Bocs S."/>
            <person name="Boursaux-Eude C."/>
            <person name="Chandler M."/>
            <person name="Charles J.-F."/>
            <person name="Dassa E."/>
            <person name="Derose R."/>
            <person name="Derzelle S."/>
            <person name="Freyssinet G."/>
            <person name="Gaudriault S."/>
            <person name="Medigue C."/>
            <person name="Lanois A."/>
            <person name="Powell K."/>
            <person name="Siguier P."/>
            <person name="Vincent R."/>
            <person name="Wingate V."/>
            <person name="Zouine M."/>
            <person name="Glaser P."/>
            <person name="Boemare N."/>
            <person name="Danchin A."/>
            <person name="Kunst F."/>
        </authorList>
    </citation>
    <scope>NUCLEOTIDE SEQUENCE [LARGE SCALE GENOMIC DNA]</scope>
    <source>
        <strain>DSM 15139 / CIP 105565 / TT01</strain>
    </source>
</reference>
<gene>
    <name evidence="1" type="primary">hisF</name>
    <name type="ordered locus">plu1565</name>
</gene>
<dbReference type="EC" id="4.3.2.10" evidence="1"/>
<dbReference type="EMBL" id="BX571864">
    <property type="protein sequence ID" value="CAE13858.1"/>
    <property type="molecule type" value="Genomic_DNA"/>
</dbReference>
<dbReference type="RefSeq" id="WP_011145862.1">
    <property type="nucleotide sequence ID" value="NC_005126.1"/>
</dbReference>
<dbReference type="SMR" id="Q7N6I5"/>
<dbReference type="STRING" id="243265.plu1565"/>
<dbReference type="GeneID" id="48847852"/>
<dbReference type="KEGG" id="plu:plu1565"/>
<dbReference type="eggNOG" id="COG0107">
    <property type="taxonomic scope" value="Bacteria"/>
</dbReference>
<dbReference type="HOGENOM" id="CLU_048577_4_0_6"/>
<dbReference type="OrthoDB" id="9781903at2"/>
<dbReference type="UniPathway" id="UPA00031">
    <property type="reaction ID" value="UER00010"/>
</dbReference>
<dbReference type="Proteomes" id="UP000002514">
    <property type="component" value="Chromosome"/>
</dbReference>
<dbReference type="GO" id="GO:0005737">
    <property type="term" value="C:cytoplasm"/>
    <property type="evidence" value="ECO:0007669"/>
    <property type="project" value="UniProtKB-SubCell"/>
</dbReference>
<dbReference type="GO" id="GO:0000107">
    <property type="term" value="F:imidazoleglycerol-phosphate synthase activity"/>
    <property type="evidence" value="ECO:0007669"/>
    <property type="project" value="UniProtKB-UniRule"/>
</dbReference>
<dbReference type="GO" id="GO:0016829">
    <property type="term" value="F:lyase activity"/>
    <property type="evidence" value="ECO:0007669"/>
    <property type="project" value="UniProtKB-KW"/>
</dbReference>
<dbReference type="GO" id="GO:0000105">
    <property type="term" value="P:L-histidine biosynthetic process"/>
    <property type="evidence" value="ECO:0007669"/>
    <property type="project" value="UniProtKB-UniRule"/>
</dbReference>
<dbReference type="CDD" id="cd04731">
    <property type="entry name" value="HisF"/>
    <property type="match status" value="1"/>
</dbReference>
<dbReference type="FunFam" id="3.20.20.70:FF:000006">
    <property type="entry name" value="Imidazole glycerol phosphate synthase subunit HisF"/>
    <property type="match status" value="1"/>
</dbReference>
<dbReference type="Gene3D" id="3.20.20.70">
    <property type="entry name" value="Aldolase class I"/>
    <property type="match status" value="1"/>
</dbReference>
<dbReference type="HAMAP" id="MF_01013">
    <property type="entry name" value="HisF"/>
    <property type="match status" value="1"/>
</dbReference>
<dbReference type="InterPro" id="IPR013785">
    <property type="entry name" value="Aldolase_TIM"/>
</dbReference>
<dbReference type="InterPro" id="IPR006062">
    <property type="entry name" value="His_biosynth"/>
</dbReference>
<dbReference type="InterPro" id="IPR004651">
    <property type="entry name" value="HisF"/>
</dbReference>
<dbReference type="InterPro" id="IPR050064">
    <property type="entry name" value="IGPS_HisA/HisF"/>
</dbReference>
<dbReference type="InterPro" id="IPR011060">
    <property type="entry name" value="RibuloseP-bd_barrel"/>
</dbReference>
<dbReference type="NCBIfam" id="TIGR00735">
    <property type="entry name" value="hisF"/>
    <property type="match status" value="1"/>
</dbReference>
<dbReference type="PANTHER" id="PTHR21235:SF2">
    <property type="entry name" value="IMIDAZOLE GLYCEROL PHOSPHATE SYNTHASE HISHF"/>
    <property type="match status" value="1"/>
</dbReference>
<dbReference type="PANTHER" id="PTHR21235">
    <property type="entry name" value="IMIDAZOLE GLYCEROL PHOSPHATE SYNTHASE SUBUNIT HISF/H IGP SYNTHASE SUBUNIT HISF/H"/>
    <property type="match status" value="1"/>
</dbReference>
<dbReference type="Pfam" id="PF00977">
    <property type="entry name" value="His_biosynth"/>
    <property type="match status" value="1"/>
</dbReference>
<dbReference type="SUPFAM" id="SSF51366">
    <property type="entry name" value="Ribulose-phoshate binding barrel"/>
    <property type="match status" value="1"/>
</dbReference>
<comment type="function">
    <text evidence="1">IGPS catalyzes the conversion of PRFAR and glutamine to IGP, AICAR and glutamate. The HisF subunit catalyzes the cyclization activity that produces IGP and AICAR from PRFAR using the ammonia provided by the HisH subunit.</text>
</comment>
<comment type="catalytic activity">
    <reaction evidence="1">
        <text>5-[(5-phospho-1-deoxy-D-ribulos-1-ylimino)methylamino]-1-(5-phospho-beta-D-ribosyl)imidazole-4-carboxamide + L-glutamine = D-erythro-1-(imidazol-4-yl)glycerol 3-phosphate + 5-amino-1-(5-phospho-beta-D-ribosyl)imidazole-4-carboxamide + L-glutamate + H(+)</text>
        <dbReference type="Rhea" id="RHEA:24793"/>
        <dbReference type="ChEBI" id="CHEBI:15378"/>
        <dbReference type="ChEBI" id="CHEBI:29985"/>
        <dbReference type="ChEBI" id="CHEBI:58278"/>
        <dbReference type="ChEBI" id="CHEBI:58359"/>
        <dbReference type="ChEBI" id="CHEBI:58475"/>
        <dbReference type="ChEBI" id="CHEBI:58525"/>
        <dbReference type="EC" id="4.3.2.10"/>
    </reaction>
</comment>
<comment type="pathway">
    <text evidence="1">Amino-acid biosynthesis; L-histidine biosynthesis; L-histidine from 5-phospho-alpha-D-ribose 1-diphosphate: step 5/9.</text>
</comment>
<comment type="subunit">
    <text evidence="1">Heterodimer of HisH and HisF.</text>
</comment>
<comment type="subcellular location">
    <subcellularLocation>
        <location evidence="1">Cytoplasm</location>
    </subcellularLocation>
</comment>
<comment type="similarity">
    <text evidence="1">Belongs to the HisA/HisF family.</text>
</comment>
<feature type="chain" id="PRO_0000142198" description="Imidazole glycerol phosphate synthase subunit HisF">
    <location>
        <begin position="1"/>
        <end position="258"/>
    </location>
</feature>
<feature type="active site" evidence="1">
    <location>
        <position position="11"/>
    </location>
</feature>
<feature type="active site" evidence="1">
    <location>
        <position position="130"/>
    </location>
</feature>
<sequence length="258" mass="28519">MLAKRIIPCLDVRDGQVVKGIQFRHHEIIGDIVPLAQRYATEGADELVFYDITASSDGRVVDKSWITKVAEVIDIPFCVAGGIKTVEDAGQILSFGADKISINSPALTDPTLITRLADRYGVQCIVVGIDTWFDESTGRYQVYQFTGDEKRTKATQWQTLNWVKEAQHRGAGEIVLNMMNQDGVRNGYDLTQLKQVRDVCHVPLIASGGAGAPEHFLDAFKQANVDGALAASVFHKHIINICELKQYLSQQGVEIRTC</sequence>
<protein>
    <recommendedName>
        <fullName evidence="1">Imidazole glycerol phosphate synthase subunit HisF</fullName>
        <ecNumber evidence="1">4.3.2.10</ecNumber>
    </recommendedName>
    <alternativeName>
        <fullName evidence="1">IGP synthase cyclase subunit</fullName>
    </alternativeName>
    <alternativeName>
        <fullName evidence="1">IGP synthase subunit HisF</fullName>
    </alternativeName>
    <alternativeName>
        <fullName evidence="1">ImGP synthase subunit HisF</fullName>
        <shortName evidence="1">IGPS subunit HisF</shortName>
    </alternativeName>
</protein>
<organism>
    <name type="scientific">Photorhabdus laumondii subsp. laumondii (strain DSM 15139 / CIP 105565 / TT01)</name>
    <name type="common">Photorhabdus luminescens subsp. laumondii</name>
    <dbReference type="NCBI Taxonomy" id="243265"/>
    <lineage>
        <taxon>Bacteria</taxon>
        <taxon>Pseudomonadati</taxon>
        <taxon>Pseudomonadota</taxon>
        <taxon>Gammaproteobacteria</taxon>
        <taxon>Enterobacterales</taxon>
        <taxon>Morganellaceae</taxon>
        <taxon>Photorhabdus</taxon>
    </lineage>
</organism>
<proteinExistence type="inferred from homology"/>
<name>HIS6_PHOLL</name>
<keyword id="KW-0028">Amino-acid biosynthesis</keyword>
<keyword id="KW-0963">Cytoplasm</keyword>
<keyword id="KW-0368">Histidine biosynthesis</keyword>
<keyword id="KW-0456">Lyase</keyword>
<keyword id="KW-1185">Reference proteome</keyword>